<organism>
    <name type="scientific">Mycobacterium tuberculosis (strain CDC 1551 / Oshkosh)</name>
    <dbReference type="NCBI Taxonomy" id="83331"/>
    <lineage>
        <taxon>Bacteria</taxon>
        <taxon>Bacillati</taxon>
        <taxon>Actinomycetota</taxon>
        <taxon>Actinomycetes</taxon>
        <taxon>Mycobacteriales</taxon>
        <taxon>Mycobacteriaceae</taxon>
        <taxon>Mycobacterium</taxon>
        <taxon>Mycobacterium tuberculosis complex</taxon>
    </lineage>
</organism>
<proteinExistence type="inferred from homology"/>
<protein>
    <recommendedName>
        <fullName>ESX-2 secretion system protein EccE2</fullName>
    </recommendedName>
    <alternativeName>
        <fullName>ESX conserved component E2</fullName>
    </alternativeName>
    <alternativeName>
        <fullName>Type VII secretion system protein EccE2</fullName>
        <shortName>T7SS protein EccE2</shortName>
    </alternativeName>
</protein>
<accession>P9WJE6</accession>
<accession>L0TE26</accession>
<accession>O05459</accession>
<accession>Q8VIR5</accession>
<keyword id="KW-1003">Cell membrane</keyword>
<keyword id="KW-0472">Membrane</keyword>
<keyword id="KW-1185">Reference proteome</keyword>
<keyword id="KW-0812">Transmembrane</keyword>
<keyword id="KW-1133">Transmembrane helix</keyword>
<comment type="subunit">
    <text evidence="1">Could be part of the ESX-2 / type VII secretion system (T7SS), which is composed of cytosolic and membrane components.</text>
</comment>
<comment type="subcellular location">
    <subcellularLocation>
        <location evidence="3">Cell membrane</location>
        <topology evidence="3">Single-pass membrane protein</topology>
    </subcellularLocation>
</comment>
<comment type="similarity">
    <text evidence="3">Belongs to the EccE family.</text>
</comment>
<comment type="sequence caution" evidence="3">
    <conflict type="frameshift">
        <sequence resource="EMBL-CDS" id="AAK48368"/>
    </conflict>
</comment>
<feature type="chain" id="PRO_0000427843" description="ESX-2 secretion system protein EccE2">
    <location>
        <begin position="1"/>
        <end position="537"/>
    </location>
</feature>
<feature type="transmembrane region" description="Helical" evidence="2">
    <location>
        <begin position="31"/>
        <end position="51"/>
    </location>
</feature>
<sequence length="537" mass="57656">MTSKLTGFSPRSARRVAGVWTVFVLASAGWALGGQLGAVMAVVVGVALVFVQWWGQPAWSWAVLGLRGRRPVKWNDPITLANNRSGGGVRVQDGVAVVAVQLLGRAHRATTVTGSVTVESDNVIDVVELAPLLRHPLDLELDSISVVTFGSRTGTVGDYPRVYDAEIGTPPYAGRRETWLIMRLPVIGNTQALRWRTSVGAAAISVAQRVASSLRCQGLRAKLATATDLAELDRRLGSDAVAGSAQRWKAIRGEAGWMTTYAYPAEAISSRVLSQAWTLRADEVIQNVTVYPDATCTATITVRTPTPAPTPPSVILRRLNGEQAAAAAANMCGPRPHLRGQRRCPLPAQLVTEIGPSGVLIGKLSNGDRLMIPVTDAGELSRVFVAADDTIAKRIVIRVVGAGERVCVHTRDQERWASVRMPQLSIVGTPRPAPRTTVGVVEYVRRRKNGDDGKSEGSGVDVAISPTPRPASVITIARPGTSLSESDRHGFEVTIEQIDRATVKVGAAGQNWLVEMEMFRAENRYVSLEPVTMSIGR</sequence>
<name>ECCE2_MYCTO</name>
<reference key="1">
    <citation type="journal article" date="2002" name="J. Bacteriol.">
        <title>Whole-genome comparison of Mycobacterium tuberculosis clinical and laboratory strains.</title>
        <authorList>
            <person name="Fleischmann R.D."/>
            <person name="Alland D."/>
            <person name="Eisen J.A."/>
            <person name="Carpenter L."/>
            <person name="White O."/>
            <person name="Peterson J.D."/>
            <person name="DeBoy R.T."/>
            <person name="Dodson R.J."/>
            <person name="Gwinn M.L."/>
            <person name="Haft D.H."/>
            <person name="Hickey E.K."/>
            <person name="Kolonay J.F."/>
            <person name="Nelson W.C."/>
            <person name="Umayam L.A."/>
            <person name="Ermolaeva M.D."/>
            <person name="Salzberg S.L."/>
            <person name="Delcher A."/>
            <person name="Utterback T.R."/>
            <person name="Weidman J.F."/>
            <person name="Khouri H.M."/>
            <person name="Gill J."/>
            <person name="Mikula A."/>
            <person name="Bishai W."/>
            <person name="Jacobs W.R. Jr."/>
            <person name="Venter J.C."/>
            <person name="Fraser C.M."/>
        </authorList>
    </citation>
    <scope>NUCLEOTIDE SEQUENCE [LARGE SCALE GENOMIC DNA]</scope>
    <source>
        <strain>CDC 1551 / Oshkosh</strain>
    </source>
</reference>
<evidence type="ECO:0000250" key="1"/>
<evidence type="ECO:0000255" key="2"/>
<evidence type="ECO:0000305" key="3"/>
<dbReference type="EMBL" id="AE000516">
    <property type="protein sequence ID" value="AAK48368.1"/>
    <property type="status" value="ALT_FRAME"/>
    <property type="molecule type" value="Genomic_DNA"/>
</dbReference>
<dbReference type="PIR" id="F70597">
    <property type="entry name" value="F70597"/>
</dbReference>
<dbReference type="RefSeq" id="WP_003902572.1">
    <property type="nucleotide sequence ID" value="NZ_KK341228.1"/>
</dbReference>
<dbReference type="GeneID" id="45427888"/>
<dbReference type="KEGG" id="mtc:MT4000"/>
<dbReference type="PATRIC" id="fig|83331.31.peg.4305"/>
<dbReference type="HOGENOM" id="CLU_040158_0_0_11"/>
<dbReference type="Proteomes" id="UP000001020">
    <property type="component" value="Chromosome"/>
</dbReference>
<dbReference type="GO" id="GO:0005886">
    <property type="term" value="C:plasma membrane"/>
    <property type="evidence" value="ECO:0007669"/>
    <property type="project" value="UniProtKB-SubCell"/>
</dbReference>
<dbReference type="InterPro" id="IPR050051">
    <property type="entry name" value="EccE_dom"/>
</dbReference>
<dbReference type="InterPro" id="IPR021368">
    <property type="entry name" value="T7SS_EccE"/>
</dbReference>
<dbReference type="NCBIfam" id="TIGR03923">
    <property type="entry name" value="T7SS_EccE"/>
    <property type="match status" value="1"/>
</dbReference>
<dbReference type="Pfam" id="PF11203">
    <property type="entry name" value="EccE"/>
    <property type="match status" value="1"/>
</dbReference>
<gene>
    <name type="primary">eccE2</name>
    <name type="ordered locus">MT4000</name>
</gene>